<feature type="chain" id="PRO_0000387803" description="4-hydroxy-2-oxovalerate aldolase 3">
    <location>
        <begin position="1"/>
        <end position="348"/>
    </location>
</feature>
<feature type="domain" description="Pyruvate carboxyltransferase" evidence="1">
    <location>
        <begin position="8"/>
        <end position="260"/>
    </location>
</feature>
<feature type="active site" description="Proton acceptor" evidence="1">
    <location>
        <position position="20"/>
    </location>
</feature>
<feature type="binding site" evidence="1">
    <location>
        <begin position="16"/>
        <end position="17"/>
    </location>
    <ligand>
        <name>substrate</name>
    </ligand>
</feature>
<feature type="binding site" evidence="1">
    <location>
        <position position="17"/>
    </location>
    <ligand>
        <name>Mn(2+)</name>
        <dbReference type="ChEBI" id="CHEBI:29035"/>
    </ligand>
</feature>
<feature type="binding site" evidence="1">
    <location>
        <position position="170"/>
    </location>
    <ligand>
        <name>substrate</name>
    </ligand>
</feature>
<feature type="binding site" evidence="1">
    <location>
        <position position="199"/>
    </location>
    <ligand>
        <name>Mn(2+)</name>
        <dbReference type="ChEBI" id="CHEBI:29035"/>
    </ligand>
</feature>
<feature type="binding site" evidence="1">
    <location>
        <position position="199"/>
    </location>
    <ligand>
        <name>substrate</name>
    </ligand>
</feature>
<feature type="binding site" evidence="1">
    <location>
        <position position="201"/>
    </location>
    <ligand>
        <name>Mn(2+)</name>
        <dbReference type="ChEBI" id="CHEBI:29035"/>
    </ligand>
</feature>
<feature type="binding site" evidence="1">
    <location>
        <position position="290"/>
    </location>
    <ligand>
        <name>substrate</name>
    </ligand>
</feature>
<feature type="site" description="Transition state stabilizer" evidence="1">
    <location>
        <position position="16"/>
    </location>
</feature>
<name>HOA3_BURL3</name>
<protein>
    <recommendedName>
        <fullName evidence="1">4-hydroxy-2-oxovalerate aldolase 3</fullName>
        <shortName evidence="1">HOA 3</shortName>
        <ecNumber evidence="1">4.1.3.39</ecNumber>
    </recommendedName>
    <alternativeName>
        <fullName evidence="1">4-hydroxy-2-keto-pentanoic acid aldolase 3</fullName>
    </alternativeName>
    <alternativeName>
        <fullName evidence="1">4-hydroxy-2-oxopentanoate aldolase 3</fullName>
    </alternativeName>
</protein>
<keyword id="KW-0058">Aromatic hydrocarbons catabolism</keyword>
<keyword id="KW-0456">Lyase</keyword>
<keyword id="KW-0464">Manganese</keyword>
<keyword id="KW-0479">Metal-binding</keyword>
<gene>
    <name type="ordered locus">Bcep18194_B2959</name>
</gene>
<reference key="1">
    <citation type="submission" date="2005-10" db="EMBL/GenBank/DDBJ databases">
        <title>Complete sequence of chromosome 2 of Burkholderia sp. 383.</title>
        <authorList>
            <consortium name="US DOE Joint Genome Institute"/>
            <person name="Copeland A."/>
            <person name="Lucas S."/>
            <person name="Lapidus A."/>
            <person name="Barry K."/>
            <person name="Detter J.C."/>
            <person name="Glavina T."/>
            <person name="Hammon N."/>
            <person name="Israni S."/>
            <person name="Pitluck S."/>
            <person name="Chain P."/>
            <person name="Malfatti S."/>
            <person name="Shin M."/>
            <person name="Vergez L."/>
            <person name="Schmutz J."/>
            <person name="Larimer F."/>
            <person name="Land M."/>
            <person name="Kyrpides N."/>
            <person name="Lykidis A."/>
            <person name="Richardson P."/>
        </authorList>
    </citation>
    <scope>NUCLEOTIDE SEQUENCE [LARGE SCALE GENOMIC DNA]</scope>
    <source>
        <strain>ATCC 17760 / DSM 23089 / LMG 22485 / NCIMB 9086 / R18194 / 383</strain>
    </source>
</reference>
<evidence type="ECO:0000255" key="1">
    <source>
        <dbReference type="HAMAP-Rule" id="MF_01656"/>
    </source>
</evidence>
<comment type="catalytic activity">
    <reaction evidence="1">
        <text>(S)-4-hydroxy-2-oxopentanoate = acetaldehyde + pyruvate</text>
        <dbReference type="Rhea" id="RHEA:22624"/>
        <dbReference type="ChEBI" id="CHEBI:15343"/>
        <dbReference type="ChEBI" id="CHEBI:15361"/>
        <dbReference type="ChEBI" id="CHEBI:73143"/>
        <dbReference type="EC" id="4.1.3.39"/>
    </reaction>
</comment>
<comment type="similarity">
    <text evidence="1">Belongs to the 4-hydroxy-2-oxovalerate aldolase family.</text>
</comment>
<accession>Q390P6</accession>
<organism>
    <name type="scientific">Burkholderia lata (strain ATCC 17760 / DSM 23089 / LMG 22485 / NCIMB 9086 / R18194 / 383)</name>
    <dbReference type="NCBI Taxonomy" id="482957"/>
    <lineage>
        <taxon>Bacteria</taxon>
        <taxon>Pseudomonadati</taxon>
        <taxon>Pseudomonadota</taxon>
        <taxon>Betaproteobacteria</taxon>
        <taxon>Burkholderiales</taxon>
        <taxon>Burkholderiaceae</taxon>
        <taxon>Burkholderia</taxon>
        <taxon>Burkholderia cepacia complex</taxon>
    </lineage>
</organism>
<sequence>MNLKGKRITVHDMTLRDGMHPKRHQMTLDQMRAVATGLDAAGVPLIEVTHGDGLGGSSVNYGFPAHTDAEYLGAVIPLLKRAKVSALLLPGIGTVDHLKEAHALGVHTIRVATHCTEADVSEQHIAMARKLDMDTVGFLMMSHMNSPEGLVKQAKLMESYGANCIYITDSAGYMLPDDVKARLGAVRDALQPQTELGFHGHHNLAMGVANSIAAIEAGANRIDGAAAGLGAGAGNTPLEVFVAVCERMGIETGVDVWKIQDVAEDLVVPMMDFPIRLDRDALTLGYAGVYGSFLLFAKRAGDKYGIPARDILVELGRRGMVGGQEDMIEDTALTLAKARAAQAKREAA</sequence>
<dbReference type="EC" id="4.1.3.39" evidence="1"/>
<dbReference type="EMBL" id="CP000152">
    <property type="protein sequence ID" value="ABB13070.1"/>
    <property type="molecule type" value="Genomic_DNA"/>
</dbReference>
<dbReference type="RefSeq" id="WP_011356549.1">
    <property type="nucleotide sequence ID" value="NC_007511.1"/>
</dbReference>
<dbReference type="SMR" id="Q390P6"/>
<dbReference type="GeneID" id="45099262"/>
<dbReference type="KEGG" id="bur:Bcep18194_B2959"/>
<dbReference type="PATRIC" id="fig|482957.22.peg.6781"/>
<dbReference type="HOGENOM" id="CLU_049173_0_0_4"/>
<dbReference type="Proteomes" id="UP000002705">
    <property type="component" value="Chromosome 2"/>
</dbReference>
<dbReference type="GO" id="GO:0003852">
    <property type="term" value="F:2-isopropylmalate synthase activity"/>
    <property type="evidence" value="ECO:0007669"/>
    <property type="project" value="TreeGrafter"/>
</dbReference>
<dbReference type="GO" id="GO:0008701">
    <property type="term" value="F:4-hydroxy-2-oxovalerate aldolase activity"/>
    <property type="evidence" value="ECO:0007669"/>
    <property type="project" value="UniProtKB-UniRule"/>
</dbReference>
<dbReference type="GO" id="GO:0030145">
    <property type="term" value="F:manganese ion binding"/>
    <property type="evidence" value="ECO:0007669"/>
    <property type="project" value="UniProtKB-UniRule"/>
</dbReference>
<dbReference type="GO" id="GO:0009056">
    <property type="term" value="P:catabolic process"/>
    <property type="evidence" value="ECO:0007669"/>
    <property type="project" value="UniProtKB-KW"/>
</dbReference>
<dbReference type="GO" id="GO:0009098">
    <property type="term" value="P:L-leucine biosynthetic process"/>
    <property type="evidence" value="ECO:0007669"/>
    <property type="project" value="TreeGrafter"/>
</dbReference>
<dbReference type="CDD" id="cd07943">
    <property type="entry name" value="DRE_TIM_HOA"/>
    <property type="match status" value="1"/>
</dbReference>
<dbReference type="Gene3D" id="1.10.8.60">
    <property type="match status" value="1"/>
</dbReference>
<dbReference type="Gene3D" id="3.20.20.70">
    <property type="entry name" value="Aldolase class I"/>
    <property type="match status" value="1"/>
</dbReference>
<dbReference type="HAMAP" id="MF_01656">
    <property type="entry name" value="HOA"/>
    <property type="match status" value="1"/>
</dbReference>
<dbReference type="InterPro" id="IPR050073">
    <property type="entry name" value="2-IPM_HCS-like"/>
</dbReference>
<dbReference type="InterPro" id="IPR017629">
    <property type="entry name" value="4OH_2_O-val_aldolase"/>
</dbReference>
<dbReference type="InterPro" id="IPR013785">
    <property type="entry name" value="Aldolase_TIM"/>
</dbReference>
<dbReference type="InterPro" id="IPR012425">
    <property type="entry name" value="DmpG_comm"/>
</dbReference>
<dbReference type="InterPro" id="IPR035685">
    <property type="entry name" value="DRE_TIM_HOA"/>
</dbReference>
<dbReference type="InterPro" id="IPR000891">
    <property type="entry name" value="PYR_CT"/>
</dbReference>
<dbReference type="NCBIfam" id="TIGR03217">
    <property type="entry name" value="4OH_2_O_val_ald"/>
    <property type="match status" value="1"/>
</dbReference>
<dbReference type="NCBIfam" id="NF006049">
    <property type="entry name" value="PRK08195.1"/>
    <property type="match status" value="1"/>
</dbReference>
<dbReference type="PANTHER" id="PTHR10277:SF9">
    <property type="entry name" value="2-ISOPROPYLMALATE SYNTHASE 1, CHLOROPLASTIC-RELATED"/>
    <property type="match status" value="1"/>
</dbReference>
<dbReference type="PANTHER" id="PTHR10277">
    <property type="entry name" value="HOMOCITRATE SYNTHASE-RELATED"/>
    <property type="match status" value="1"/>
</dbReference>
<dbReference type="Pfam" id="PF07836">
    <property type="entry name" value="DmpG_comm"/>
    <property type="match status" value="1"/>
</dbReference>
<dbReference type="Pfam" id="PF00682">
    <property type="entry name" value="HMGL-like"/>
    <property type="match status" value="1"/>
</dbReference>
<dbReference type="SUPFAM" id="SSF51569">
    <property type="entry name" value="Aldolase"/>
    <property type="match status" value="1"/>
</dbReference>
<dbReference type="SUPFAM" id="SSF89000">
    <property type="entry name" value="post-HMGL domain-like"/>
    <property type="match status" value="1"/>
</dbReference>
<dbReference type="PROSITE" id="PS50991">
    <property type="entry name" value="PYR_CT"/>
    <property type="match status" value="1"/>
</dbReference>
<proteinExistence type="inferred from homology"/>